<comment type="function">
    <text evidence="1">Tyrosine--tRNA ligase that catalyzes the attachment of tyrosine to tRNA(Tyr) in a two-step reaction: tyrosine is first activated by ATP to form Tyr-AMP and then transferred to the acceptor end of tRNA(Tyr). Also acts as a positive regulator of poly-ADP-ribosylation in the nucleus, independently of its tyrosine--tRNA ligase activity. Activity is switched upon resveratrol-binding: resveratrol strongly inhibits the tyrosine--tRNA ligase activity and promotes relocalization to the nucleus, where YARS1 specifically stimulates the poly-ADP-ribosyltransferase activity of PARP1.</text>
</comment>
<comment type="catalytic activity">
    <reaction evidence="1">
        <text>tRNA(Tyr) + L-tyrosine + ATP = L-tyrosyl-tRNA(Tyr) + AMP + diphosphate + H(+)</text>
        <dbReference type="Rhea" id="RHEA:10220"/>
        <dbReference type="Rhea" id="RHEA-COMP:9706"/>
        <dbReference type="Rhea" id="RHEA-COMP:9707"/>
        <dbReference type="ChEBI" id="CHEBI:15378"/>
        <dbReference type="ChEBI" id="CHEBI:30616"/>
        <dbReference type="ChEBI" id="CHEBI:33019"/>
        <dbReference type="ChEBI" id="CHEBI:58315"/>
        <dbReference type="ChEBI" id="CHEBI:78442"/>
        <dbReference type="ChEBI" id="CHEBI:78536"/>
        <dbReference type="ChEBI" id="CHEBI:456215"/>
        <dbReference type="EC" id="6.1.1.1"/>
    </reaction>
    <physiologicalReaction direction="left-to-right" evidence="1">
        <dbReference type="Rhea" id="RHEA:10221"/>
    </physiologicalReaction>
</comment>
<comment type="activity regulation">
    <text evidence="1">Resveratrol strongly inhibits the tyrosine--tRNA ligase activity.</text>
</comment>
<comment type="subunit">
    <text evidence="1">Homodimer. Interacts (when binding to resveratrol) with PARP1; interaction stimulates the poly-ADP-ribosyltransferase activity of PARP1.</text>
</comment>
<comment type="subcellular location">
    <subcellularLocation>
        <location evidence="1">Cytoplasm</location>
    </subcellularLocation>
    <subcellularLocation>
        <location evidence="1">Nucleus</location>
    </subcellularLocation>
    <text evidence="1">Cytoplasmic in normal conditions. Resveratrol-binding in response to serum starvation promotes relocalization to the nucleus.</text>
</comment>
<comment type="domain">
    <text evidence="1">The nuclear localization signal, which mediates localization to the nucleus, is also important for interacting with tRNA(Tyr), suggesting that it is sterically blocked when tRNA(Tyr) is bound.</text>
</comment>
<comment type="similarity">
    <text evidence="4">Belongs to the class-I aminoacyl-tRNA synthetase family.</text>
</comment>
<reference key="1">
    <citation type="journal article" date="2004" name="Genome Res.">
        <title>The status, quality, and expansion of the NIH full-length cDNA project: the Mammalian Gene Collection (MGC).</title>
        <authorList>
            <consortium name="The MGC Project Team"/>
        </authorList>
    </citation>
    <scope>NUCLEOTIDE SEQUENCE [LARGE SCALE MRNA]</scope>
    <source>
        <tissue>Spleen</tissue>
    </source>
</reference>
<sequence>MGDAPSPEEKLHLITRNLQEVLGEEKLKEILKERELKVYWGTATTGKPHVAYFVPMSKIADFLKAGCEVTILFADLHAYLDNMKAPWELLELRTSYYENVIKAMLESIGVPLEKLKFTKGTDYQLSKEYTLDVYRLSSLVTQHDAKKAGAEVVKQVEHPLLSGLLYPGLQALDEEYLKVDAQFGGIDQRKIFTFAEKYLPTLGYSKRVHLMNPMVPGLTGSKMSSSEEESKIDLLDRKEDVKKKLKKAFCEPGNVENNGVLSFVKHVLFPLKSEFVILRDEKWGGNKTYTIYQELEKDFAAEVVHPGDLKNSVEVALNKLLDPIREKFNTPALKKLASAAYPDPSKQKPTAKGPAKSSEPEEIIPSRLDIRVGKILSVEKHPDADSLYVEKIDVGEAEPRTVVSGLVQFVPKEELQDRLVVVLCNLKPQKMRGVDSQGMLLCASVEGVSRQVEPLDPPAGSAPGERVFVQGYEKGQPDEELKPKKKVFEKLQADFKISDDCVAQWKQTNFMTKLGFVSCKSLKGGNIS</sequence>
<organism>
    <name type="scientific">Rattus norvegicus</name>
    <name type="common">Rat</name>
    <dbReference type="NCBI Taxonomy" id="10116"/>
    <lineage>
        <taxon>Eukaryota</taxon>
        <taxon>Metazoa</taxon>
        <taxon>Chordata</taxon>
        <taxon>Craniata</taxon>
        <taxon>Vertebrata</taxon>
        <taxon>Euteleostomi</taxon>
        <taxon>Mammalia</taxon>
        <taxon>Eutheria</taxon>
        <taxon>Euarchontoglires</taxon>
        <taxon>Glires</taxon>
        <taxon>Rodentia</taxon>
        <taxon>Myomorpha</taxon>
        <taxon>Muroidea</taxon>
        <taxon>Muridae</taxon>
        <taxon>Murinae</taxon>
        <taxon>Rattus</taxon>
    </lineage>
</organism>
<keyword id="KW-0007">Acetylation</keyword>
<keyword id="KW-0030">Aminoacyl-tRNA synthetase</keyword>
<keyword id="KW-0067">ATP-binding</keyword>
<keyword id="KW-0963">Cytoplasm</keyword>
<keyword id="KW-0436">Ligase</keyword>
<keyword id="KW-0547">Nucleotide-binding</keyword>
<keyword id="KW-0539">Nucleus</keyword>
<keyword id="KW-0597">Phosphoprotein</keyword>
<keyword id="KW-0648">Protein biosynthesis</keyword>
<keyword id="KW-1185">Reference proteome</keyword>
<keyword id="KW-0694">RNA-binding</keyword>
<keyword id="KW-0820">tRNA-binding</keyword>
<feature type="chain" id="PRO_0000423288" description="Tyrosine--tRNA ligase, cytoplasmic">
    <location>
        <begin position="1"/>
        <end position="528"/>
    </location>
</feature>
<feature type="initiator methionine" description="Removed; alternate" evidence="1">
    <location>
        <position position="1"/>
    </location>
</feature>
<feature type="chain" id="PRO_0000239691" description="Tyrosine--tRNA ligase, cytoplasmic, N-terminally processed">
    <location>
        <begin position="2"/>
        <end position="528"/>
    </location>
</feature>
<feature type="domain" description="tRNA-binding" evidence="2">
    <location>
        <begin position="364"/>
        <end position="468"/>
    </location>
</feature>
<feature type="region of interest" description="Disordered" evidence="3">
    <location>
        <begin position="339"/>
        <end position="363"/>
    </location>
</feature>
<feature type="short sequence motif" description="'HIGH' region" evidence="1">
    <location>
        <begin position="44"/>
        <end position="52"/>
    </location>
</feature>
<feature type="short sequence motif" description="'KMSKS' region" evidence="1">
    <location>
        <begin position="222"/>
        <end position="226"/>
    </location>
</feature>
<feature type="short sequence motif" description="Nuclear localization signal" evidence="1">
    <location>
        <begin position="242"/>
        <end position="247"/>
    </location>
</feature>
<feature type="binding site" evidence="1">
    <location>
        <position position="39"/>
    </location>
    <ligand>
        <name>L-tyrosine</name>
        <dbReference type="ChEBI" id="CHEBI:58315"/>
    </ligand>
</feature>
<feature type="binding site" evidence="1">
    <location>
        <position position="39"/>
    </location>
    <ligand>
        <name>trans-resveratrol</name>
        <dbReference type="ChEBI" id="CHEBI:45713"/>
    </ligand>
</feature>
<feature type="binding site" evidence="1">
    <location>
        <position position="166"/>
    </location>
    <ligand>
        <name>L-tyrosine</name>
        <dbReference type="ChEBI" id="CHEBI:58315"/>
    </ligand>
</feature>
<feature type="binding site" evidence="1">
    <location>
        <position position="170"/>
    </location>
    <ligand>
        <name>L-tyrosine</name>
        <dbReference type="ChEBI" id="CHEBI:58315"/>
    </ligand>
</feature>
<feature type="binding site" evidence="1">
    <location>
        <position position="170"/>
    </location>
    <ligand>
        <name>trans-resveratrol</name>
        <dbReference type="ChEBI" id="CHEBI:45713"/>
    </ligand>
</feature>
<feature type="binding site" evidence="1">
    <location>
        <position position="173"/>
    </location>
    <ligand>
        <name>L-tyrosine</name>
        <dbReference type="ChEBI" id="CHEBI:58315"/>
    </ligand>
</feature>
<feature type="binding site" evidence="1">
    <location>
        <position position="173"/>
    </location>
    <ligand>
        <name>trans-resveratrol</name>
        <dbReference type="ChEBI" id="CHEBI:45713"/>
    </ligand>
</feature>
<feature type="binding site" evidence="1">
    <location>
        <position position="188"/>
    </location>
    <ligand>
        <name>L-tyrosine</name>
        <dbReference type="ChEBI" id="CHEBI:58315"/>
    </ligand>
</feature>
<feature type="modified residue" description="N-acetylmethionine" evidence="1">
    <location>
        <position position="1"/>
    </location>
</feature>
<feature type="modified residue" description="N-acetylglycine; in Tyrosine--tRNA ligase, cytoplasmic, N-terminally processed" evidence="1">
    <location>
        <position position="2"/>
    </location>
</feature>
<feature type="modified residue" description="N6-acetyllysine" evidence="1">
    <location>
        <position position="197"/>
    </location>
</feature>
<feature type="modified residue" description="Phosphoserine" evidence="1">
    <location>
        <position position="205"/>
    </location>
</feature>
<feature type="modified residue" description="N6-acetyllysine" evidence="1">
    <location>
        <position position="206"/>
    </location>
</feature>
<feature type="modified residue" description="Phosphoserine" evidence="1">
    <location>
        <position position="386"/>
    </location>
</feature>
<feature type="modified residue" description="N6-acetyllysine" evidence="1">
    <location>
        <position position="474"/>
    </location>
</feature>
<feature type="modified residue" description="N6-acetyllysine" evidence="1">
    <location>
        <position position="482"/>
    </location>
</feature>
<feature type="modified residue" description="N6-acetyllysine" evidence="1">
    <location>
        <position position="490"/>
    </location>
</feature>
<gene>
    <name type="primary">Yars1</name>
    <name type="synonym">Yars</name>
</gene>
<proteinExistence type="evidence at transcript level"/>
<accession>Q4KM49</accession>
<name>SYYC_RAT</name>
<evidence type="ECO:0000250" key="1">
    <source>
        <dbReference type="UniProtKB" id="P54577"/>
    </source>
</evidence>
<evidence type="ECO:0000255" key="2">
    <source>
        <dbReference type="PROSITE-ProRule" id="PRU00209"/>
    </source>
</evidence>
<evidence type="ECO:0000256" key="3">
    <source>
        <dbReference type="SAM" id="MobiDB-lite"/>
    </source>
</evidence>
<evidence type="ECO:0000305" key="4"/>
<protein>
    <recommendedName>
        <fullName>Tyrosine--tRNA ligase, cytoplasmic</fullName>
        <ecNumber evidence="1">6.1.1.1</ecNumber>
    </recommendedName>
    <alternativeName>
        <fullName>Tyrosyl-tRNA synthetase</fullName>
        <shortName>TyrRS</shortName>
    </alternativeName>
    <component>
        <recommendedName>
            <fullName>Tyrosine--tRNA ligase, cytoplasmic, N-terminally processed</fullName>
        </recommendedName>
    </component>
</protein>
<dbReference type="EC" id="6.1.1.1" evidence="1"/>
<dbReference type="EMBL" id="BC098795">
    <property type="protein sequence ID" value="AAH98795.1"/>
    <property type="molecule type" value="mRNA"/>
</dbReference>
<dbReference type="RefSeq" id="NP_001020867.2">
    <property type="nucleotide sequence ID" value="NM_001025696.1"/>
</dbReference>
<dbReference type="SMR" id="Q4KM49"/>
<dbReference type="BioGRID" id="260303">
    <property type="interactions" value="2"/>
</dbReference>
<dbReference type="FunCoup" id="Q4KM49">
    <property type="interactions" value="2379"/>
</dbReference>
<dbReference type="STRING" id="10116.ENSRNOP00000010674"/>
<dbReference type="iPTMnet" id="Q4KM49"/>
<dbReference type="PhosphoSitePlus" id="Q4KM49"/>
<dbReference type="jPOST" id="Q4KM49"/>
<dbReference type="PaxDb" id="10116-ENSRNOP00000010674"/>
<dbReference type="PeptideAtlas" id="Q4KM49"/>
<dbReference type="GeneID" id="313047"/>
<dbReference type="KEGG" id="rno:313047"/>
<dbReference type="AGR" id="RGD:1307616"/>
<dbReference type="CTD" id="8565"/>
<dbReference type="RGD" id="1307616">
    <property type="gene designation" value="Yars1"/>
</dbReference>
<dbReference type="eggNOG" id="KOG2144">
    <property type="taxonomic scope" value="Eukaryota"/>
</dbReference>
<dbReference type="eggNOG" id="KOG2241">
    <property type="taxonomic scope" value="Eukaryota"/>
</dbReference>
<dbReference type="HOGENOM" id="CLU_035267_3_0_1"/>
<dbReference type="InParanoid" id="Q4KM49"/>
<dbReference type="OrthoDB" id="50486at9989"/>
<dbReference type="PhylomeDB" id="Q4KM49"/>
<dbReference type="PRO" id="PR:Q4KM49"/>
<dbReference type="Proteomes" id="UP000002494">
    <property type="component" value="Unplaced"/>
</dbReference>
<dbReference type="GO" id="GO:0005737">
    <property type="term" value="C:cytoplasm"/>
    <property type="evidence" value="ECO:0000266"/>
    <property type="project" value="RGD"/>
</dbReference>
<dbReference type="GO" id="GO:0005829">
    <property type="term" value="C:cytosol"/>
    <property type="evidence" value="ECO:0000250"/>
    <property type="project" value="UniProtKB"/>
</dbReference>
<dbReference type="GO" id="GO:0005634">
    <property type="term" value="C:nucleus"/>
    <property type="evidence" value="ECO:0000250"/>
    <property type="project" value="UniProtKB"/>
</dbReference>
<dbReference type="GO" id="GO:0005524">
    <property type="term" value="F:ATP binding"/>
    <property type="evidence" value="ECO:0007669"/>
    <property type="project" value="UniProtKB-KW"/>
</dbReference>
<dbReference type="GO" id="GO:0036094">
    <property type="term" value="F:small molecule binding"/>
    <property type="evidence" value="ECO:0000250"/>
    <property type="project" value="UniProtKB"/>
</dbReference>
<dbReference type="GO" id="GO:0000049">
    <property type="term" value="F:tRNA binding"/>
    <property type="evidence" value="ECO:0007669"/>
    <property type="project" value="UniProtKB-KW"/>
</dbReference>
<dbReference type="GO" id="GO:0004831">
    <property type="term" value="F:tyrosine-tRNA ligase activity"/>
    <property type="evidence" value="ECO:0000250"/>
    <property type="project" value="UniProtKB"/>
</dbReference>
<dbReference type="GO" id="GO:0042594">
    <property type="term" value="P:response to starvation"/>
    <property type="evidence" value="ECO:0000266"/>
    <property type="project" value="RGD"/>
</dbReference>
<dbReference type="GO" id="GO:0006437">
    <property type="term" value="P:tyrosyl-tRNA aminoacylation"/>
    <property type="evidence" value="ECO:0000266"/>
    <property type="project" value="RGD"/>
</dbReference>
<dbReference type="CDD" id="cd02799">
    <property type="entry name" value="tRNA_bind_EMAP-II_like"/>
    <property type="match status" value="1"/>
</dbReference>
<dbReference type="CDD" id="cd00805">
    <property type="entry name" value="TyrRS_core"/>
    <property type="match status" value="1"/>
</dbReference>
<dbReference type="FunFam" id="1.10.240.10:FF:000004">
    <property type="entry name" value="Tyrosine--tRNA ligase"/>
    <property type="match status" value="1"/>
</dbReference>
<dbReference type="FunFam" id="3.40.50.620:FF:000040">
    <property type="entry name" value="Tyrosine--tRNA ligase"/>
    <property type="match status" value="1"/>
</dbReference>
<dbReference type="FunFam" id="2.40.50.140:FF:000047">
    <property type="entry name" value="tyrosine--tRNA ligase, cytoplasmic isoform X2"/>
    <property type="match status" value="1"/>
</dbReference>
<dbReference type="Gene3D" id="3.40.50.620">
    <property type="entry name" value="HUPs"/>
    <property type="match status" value="1"/>
</dbReference>
<dbReference type="Gene3D" id="2.40.50.140">
    <property type="entry name" value="Nucleic acid-binding proteins"/>
    <property type="match status" value="1"/>
</dbReference>
<dbReference type="Gene3D" id="1.10.240.10">
    <property type="entry name" value="Tyrosyl-Transfer RNA Synthetase"/>
    <property type="match status" value="1"/>
</dbReference>
<dbReference type="InterPro" id="IPR002305">
    <property type="entry name" value="aa-tRNA-synth_Ic"/>
</dbReference>
<dbReference type="InterPro" id="IPR012340">
    <property type="entry name" value="NA-bd_OB-fold"/>
</dbReference>
<dbReference type="InterPro" id="IPR014729">
    <property type="entry name" value="Rossmann-like_a/b/a_fold"/>
</dbReference>
<dbReference type="InterPro" id="IPR002547">
    <property type="entry name" value="tRNA-bd_dom"/>
</dbReference>
<dbReference type="InterPro" id="IPR002307">
    <property type="entry name" value="Tyr-tRNA-ligase"/>
</dbReference>
<dbReference type="InterPro" id="IPR051270">
    <property type="entry name" value="Tyrosine-tRNA_ligase_regulator"/>
</dbReference>
<dbReference type="NCBIfam" id="NF006330">
    <property type="entry name" value="PRK08560.1"/>
    <property type="match status" value="1"/>
</dbReference>
<dbReference type="NCBIfam" id="TIGR00234">
    <property type="entry name" value="tyrS"/>
    <property type="match status" value="1"/>
</dbReference>
<dbReference type="PANTHER" id="PTHR11586">
    <property type="entry name" value="TRNA-AMINOACYLATION COFACTOR ARC1 FAMILY MEMBER"/>
    <property type="match status" value="1"/>
</dbReference>
<dbReference type="PANTHER" id="PTHR11586:SF43">
    <property type="entry name" value="TYROSINE--TRNA LIGASE, CYTOPLASMIC"/>
    <property type="match status" value="1"/>
</dbReference>
<dbReference type="Pfam" id="PF00579">
    <property type="entry name" value="tRNA-synt_1b"/>
    <property type="match status" value="1"/>
</dbReference>
<dbReference type="Pfam" id="PF01588">
    <property type="entry name" value="tRNA_bind"/>
    <property type="match status" value="1"/>
</dbReference>
<dbReference type="PRINTS" id="PR01040">
    <property type="entry name" value="TRNASYNTHTYR"/>
</dbReference>
<dbReference type="SUPFAM" id="SSF50249">
    <property type="entry name" value="Nucleic acid-binding proteins"/>
    <property type="match status" value="1"/>
</dbReference>
<dbReference type="SUPFAM" id="SSF52374">
    <property type="entry name" value="Nucleotidylyl transferase"/>
    <property type="match status" value="1"/>
</dbReference>
<dbReference type="PROSITE" id="PS50886">
    <property type="entry name" value="TRBD"/>
    <property type="match status" value="1"/>
</dbReference>